<feature type="chain" id="PRO_1000091663" description="Ribonuclease HII">
    <location>
        <begin position="1"/>
        <end position="197"/>
    </location>
</feature>
<feature type="domain" description="RNase H type-2" evidence="2">
    <location>
        <begin position="14"/>
        <end position="197"/>
    </location>
</feature>
<feature type="binding site" evidence="1">
    <location>
        <position position="20"/>
    </location>
    <ligand>
        <name>a divalent metal cation</name>
        <dbReference type="ChEBI" id="CHEBI:60240"/>
    </ligand>
</feature>
<feature type="binding site" evidence="1">
    <location>
        <position position="21"/>
    </location>
    <ligand>
        <name>a divalent metal cation</name>
        <dbReference type="ChEBI" id="CHEBI:60240"/>
    </ligand>
</feature>
<feature type="binding site" evidence="1">
    <location>
        <position position="112"/>
    </location>
    <ligand>
        <name>a divalent metal cation</name>
        <dbReference type="ChEBI" id="CHEBI:60240"/>
    </ligand>
</feature>
<dbReference type="EC" id="3.1.26.4" evidence="1"/>
<dbReference type="EMBL" id="CP001080">
    <property type="protein sequence ID" value="ACD65834.1"/>
    <property type="molecule type" value="Genomic_DNA"/>
</dbReference>
<dbReference type="RefSeq" id="WP_012458924.1">
    <property type="nucleotide sequence ID" value="NC_010730.1"/>
</dbReference>
<dbReference type="SMR" id="B2V752"/>
<dbReference type="STRING" id="436114.SYO3AOP1_0189"/>
<dbReference type="KEGG" id="sul:SYO3AOP1_0189"/>
<dbReference type="eggNOG" id="COG0164">
    <property type="taxonomic scope" value="Bacteria"/>
</dbReference>
<dbReference type="HOGENOM" id="CLU_036532_2_1_0"/>
<dbReference type="GO" id="GO:0005737">
    <property type="term" value="C:cytoplasm"/>
    <property type="evidence" value="ECO:0007669"/>
    <property type="project" value="UniProtKB-SubCell"/>
</dbReference>
<dbReference type="GO" id="GO:0032299">
    <property type="term" value="C:ribonuclease H2 complex"/>
    <property type="evidence" value="ECO:0007669"/>
    <property type="project" value="TreeGrafter"/>
</dbReference>
<dbReference type="GO" id="GO:0030145">
    <property type="term" value="F:manganese ion binding"/>
    <property type="evidence" value="ECO:0007669"/>
    <property type="project" value="UniProtKB-UniRule"/>
</dbReference>
<dbReference type="GO" id="GO:0003723">
    <property type="term" value="F:RNA binding"/>
    <property type="evidence" value="ECO:0007669"/>
    <property type="project" value="InterPro"/>
</dbReference>
<dbReference type="GO" id="GO:0004523">
    <property type="term" value="F:RNA-DNA hybrid ribonuclease activity"/>
    <property type="evidence" value="ECO:0007669"/>
    <property type="project" value="UniProtKB-UniRule"/>
</dbReference>
<dbReference type="GO" id="GO:0043137">
    <property type="term" value="P:DNA replication, removal of RNA primer"/>
    <property type="evidence" value="ECO:0007669"/>
    <property type="project" value="TreeGrafter"/>
</dbReference>
<dbReference type="GO" id="GO:0006298">
    <property type="term" value="P:mismatch repair"/>
    <property type="evidence" value="ECO:0007669"/>
    <property type="project" value="TreeGrafter"/>
</dbReference>
<dbReference type="CDD" id="cd07182">
    <property type="entry name" value="RNase_HII_bacteria_HII_like"/>
    <property type="match status" value="1"/>
</dbReference>
<dbReference type="Gene3D" id="3.30.420.10">
    <property type="entry name" value="Ribonuclease H-like superfamily/Ribonuclease H"/>
    <property type="match status" value="1"/>
</dbReference>
<dbReference type="HAMAP" id="MF_00052_B">
    <property type="entry name" value="RNase_HII_B"/>
    <property type="match status" value="1"/>
</dbReference>
<dbReference type="InterPro" id="IPR022898">
    <property type="entry name" value="RNase_HII"/>
</dbReference>
<dbReference type="InterPro" id="IPR001352">
    <property type="entry name" value="RNase_HII/HIII"/>
</dbReference>
<dbReference type="InterPro" id="IPR024567">
    <property type="entry name" value="RNase_HII/HIII_dom"/>
</dbReference>
<dbReference type="InterPro" id="IPR012337">
    <property type="entry name" value="RNaseH-like_sf"/>
</dbReference>
<dbReference type="InterPro" id="IPR036397">
    <property type="entry name" value="RNaseH_sf"/>
</dbReference>
<dbReference type="NCBIfam" id="NF000595">
    <property type="entry name" value="PRK00015.1-3"/>
    <property type="match status" value="1"/>
</dbReference>
<dbReference type="PANTHER" id="PTHR10954">
    <property type="entry name" value="RIBONUCLEASE H2 SUBUNIT A"/>
    <property type="match status" value="1"/>
</dbReference>
<dbReference type="PANTHER" id="PTHR10954:SF18">
    <property type="entry name" value="RIBONUCLEASE HII"/>
    <property type="match status" value="1"/>
</dbReference>
<dbReference type="Pfam" id="PF01351">
    <property type="entry name" value="RNase_HII"/>
    <property type="match status" value="1"/>
</dbReference>
<dbReference type="SUPFAM" id="SSF53098">
    <property type="entry name" value="Ribonuclease H-like"/>
    <property type="match status" value="1"/>
</dbReference>
<dbReference type="PROSITE" id="PS51975">
    <property type="entry name" value="RNASE_H_2"/>
    <property type="match status" value="1"/>
</dbReference>
<evidence type="ECO:0000255" key="1">
    <source>
        <dbReference type="HAMAP-Rule" id="MF_00052"/>
    </source>
</evidence>
<evidence type="ECO:0000255" key="2">
    <source>
        <dbReference type="PROSITE-ProRule" id="PRU01319"/>
    </source>
</evidence>
<gene>
    <name evidence="1" type="primary">rnhB</name>
    <name type="ordered locus">SYO3AOP1_0189</name>
</gene>
<protein>
    <recommendedName>
        <fullName evidence="1">Ribonuclease HII</fullName>
        <shortName evidence="1">RNase HII</shortName>
        <ecNumber evidence="1">3.1.26.4</ecNumber>
    </recommendedName>
</protein>
<accession>B2V752</accession>
<organism>
    <name type="scientific">Sulfurihydrogenibium sp. (strain YO3AOP1)</name>
    <dbReference type="NCBI Taxonomy" id="436114"/>
    <lineage>
        <taxon>Bacteria</taxon>
        <taxon>Pseudomonadati</taxon>
        <taxon>Aquificota</taxon>
        <taxon>Aquificia</taxon>
        <taxon>Aquificales</taxon>
        <taxon>Hydrogenothermaceae</taxon>
        <taxon>Sulfurihydrogenibium</taxon>
    </lineage>
</organism>
<sequence length="197" mass="22580">MDNVEKELFSQGYEKIVGIDEAGRGPLAGPLVIASVIFPKHQKPFIHTDSKGLSEKEREYLFEKIHDYAEEINITIVENTEIDKFGISNAAKIYMENNLKSLKSKWDIALVDFVKLDESINHLPLIKGDEISHTIAAASIIAKVVRDRIMIEYKEKYPNFSFDKHKGYATKQHYQEIKKFGITPIHRRSFNLGVNDD</sequence>
<name>RNH2_SULSY</name>
<proteinExistence type="inferred from homology"/>
<comment type="function">
    <text evidence="1">Endonuclease that specifically degrades the RNA of RNA-DNA hybrids.</text>
</comment>
<comment type="catalytic activity">
    <reaction evidence="1">
        <text>Endonucleolytic cleavage to 5'-phosphomonoester.</text>
        <dbReference type="EC" id="3.1.26.4"/>
    </reaction>
</comment>
<comment type="cofactor">
    <cofactor evidence="1">
        <name>Mn(2+)</name>
        <dbReference type="ChEBI" id="CHEBI:29035"/>
    </cofactor>
    <cofactor evidence="1">
        <name>Mg(2+)</name>
        <dbReference type="ChEBI" id="CHEBI:18420"/>
    </cofactor>
    <text evidence="1">Manganese or magnesium. Binds 1 divalent metal ion per monomer in the absence of substrate. May bind a second metal ion after substrate binding.</text>
</comment>
<comment type="subcellular location">
    <subcellularLocation>
        <location evidence="1">Cytoplasm</location>
    </subcellularLocation>
</comment>
<comment type="similarity">
    <text evidence="1">Belongs to the RNase HII family.</text>
</comment>
<keyword id="KW-0963">Cytoplasm</keyword>
<keyword id="KW-0255">Endonuclease</keyword>
<keyword id="KW-0378">Hydrolase</keyword>
<keyword id="KW-0464">Manganese</keyword>
<keyword id="KW-0479">Metal-binding</keyword>
<keyword id="KW-0540">Nuclease</keyword>
<reference key="1">
    <citation type="journal article" date="2009" name="J. Bacteriol.">
        <title>Complete and draft genome sequences of six members of the Aquificales.</title>
        <authorList>
            <person name="Reysenbach A.-L."/>
            <person name="Hamamura N."/>
            <person name="Podar M."/>
            <person name="Griffiths E."/>
            <person name="Ferreira S."/>
            <person name="Hochstein R."/>
            <person name="Heidelberg J."/>
            <person name="Johnson J."/>
            <person name="Mead D."/>
            <person name="Pohorille A."/>
            <person name="Sarmiento M."/>
            <person name="Schweighofer K."/>
            <person name="Seshadri R."/>
            <person name="Voytek M.A."/>
        </authorList>
    </citation>
    <scope>NUCLEOTIDE SEQUENCE [LARGE SCALE GENOMIC DNA]</scope>
    <source>
        <strain>YO3AOP1</strain>
    </source>
</reference>